<comment type="function">
    <text evidence="1">Catalyzes the dephosphorylation of undecaprenyl diphosphate (UPP). Confers resistance to bacitracin.</text>
</comment>
<comment type="catalytic activity">
    <reaction evidence="1">
        <text>di-trans,octa-cis-undecaprenyl diphosphate + H2O = di-trans,octa-cis-undecaprenyl phosphate + phosphate + H(+)</text>
        <dbReference type="Rhea" id="RHEA:28094"/>
        <dbReference type="ChEBI" id="CHEBI:15377"/>
        <dbReference type="ChEBI" id="CHEBI:15378"/>
        <dbReference type="ChEBI" id="CHEBI:43474"/>
        <dbReference type="ChEBI" id="CHEBI:58405"/>
        <dbReference type="ChEBI" id="CHEBI:60392"/>
        <dbReference type="EC" id="3.6.1.27"/>
    </reaction>
</comment>
<comment type="subcellular location">
    <subcellularLocation>
        <location evidence="1">Cell inner membrane</location>
        <topology evidence="1">Multi-pass membrane protein</topology>
    </subcellularLocation>
</comment>
<comment type="miscellaneous">
    <text>Bacitracin is thought to be involved in the inhibition of peptidoglycan synthesis by sequestering undecaprenyl diphosphate, thereby reducing the pool of lipid carrier available.</text>
</comment>
<comment type="similarity">
    <text evidence="1">Belongs to the UppP family.</text>
</comment>
<sequence>MDIFQVIVLALIQGLTEFLPISSSAHLILPAQLLGWQDQGLTFDVAVNTGSLLAVVIYFRRELFSMFTAWTSSLVTRQQTQESKLAWWIILATIPAVIFGFTAKDFISTHLRNIEVIATTTIVFGLLLWWADKLNREGFSEFQVGWKKALLIGFAQAMALIPGTSRSGATITAALALGLSREAAARFSFLMSVPVSLGAAILVVKDLLSSQEAIDYQALVLGTALSFVAAYLCIHYFLKIISRMGMTPFVIYRLALGAILCVVIFA</sequence>
<proteinExistence type="inferred from homology"/>
<evidence type="ECO:0000255" key="1">
    <source>
        <dbReference type="HAMAP-Rule" id="MF_01006"/>
    </source>
</evidence>
<accession>A3QBM7</accession>
<organism>
    <name type="scientific">Shewanella loihica (strain ATCC BAA-1088 / PV-4)</name>
    <dbReference type="NCBI Taxonomy" id="323850"/>
    <lineage>
        <taxon>Bacteria</taxon>
        <taxon>Pseudomonadati</taxon>
        <taxon>Pseudomonadota</taxon>
        <taxon>Gammaproteobacteria</taxon>
        <taxon>Alteromonadales</taxon>
        <taxon>Shewanellaceae</taxon>
        <taxon>Shewanella</taxon>
    </lineage>
</organism>
<dbReference type="EC" id="3.6.1.27" evidence="1"/>
<dbReference type="EMBL" id="CP000606">
    <property type="protein sequence ID" value="ABO22875.1"/>
    <property type="molecule type" value="Genomic_DNA"/>
</dbReference>
<dbReference type="RefSeq" id="WP_011864808.1">
    <property type="nucleotide sequence ID" value="NC_009092.1"/>
</dbReference>
<dbReference type="SMR" id="A3QBM7"/>
<dbReference type="STRING" id="323850.Shew_1004"/>
<dbReference type="KEGG" id="slo:Shew_1004"/>
<dbReference type="eggNOG" id="COG1968">
    <property type="taxonomic scope" value="Bacteria"/>
</dbReference>
<dbReference type="HOGENOM" id="CLU_060296_1_0_6"/>
<dbReference type="OrthoDB" id="9808289at2"/>
<dbReference type="Proteomes" id="UP000001558">
    <property type="component" value="Chromosome"/>
</dbReference>
<dbReference type="GO" id="GO:0005886">
    <property type="term" value="C:plasma membrane"/>
    <property type="evidence" value="ECO:0007669"/>
    <property type="project" value="UniProtKB-SubCell"/>
</dbReference>
<dbReference type="GO" id="GO:0050380">
    <property type="term" value="F:undecaprenyl-diphosphatase activity"/>
    <property type="evidence" value="ECO:0007669"/>
    <property type="project" value="UniProtKB-UniRule"/>
</dbReference>
<dbReference type="GO" id="GO:0071555">
    <property type="term" value="P:cell wall organization"/>
    <property type="evidence" value="ECO:0007669"/>
    <property type="project" value="UniProtKB-KW"/>
</dbReference>
<dbReference type="GO" id="GO:0009252">
    <property type="term" value="P:peptidoglycan biosynthetic process"/>
    <property type="evidence" value="ECO:0007669"/>
    <property type="project" value="UniProtKB-KW"/>
</dbReference>
<dbReference type="GO" id="GO:0008360">
    <property type="term" value="P:regulation of cell shape"/>
    <property type="evidence" value="ECO:0007669"/>
    <property type="project" value="UniProtKB-KW"/>
</dbReference>
<dbReference type="GO" id="GO:0046677">
    <property type="term" value="P:response to antibiotic"/>
    <property type="evidence" value="ECO:0007669"/>
    <property type="project" value="UniProtKB-UniRule"/>
</dbReference>
<dbReference type="HAMAP" id="MF_01006">
    <property type="entry name" value="Undec_diphosphatase"/>
    <property type="match status" value="1"/>
</dbReference>
<dbReference type="InterPro" id="IPR003824">
    <property type="entry name" value="UppP"/>
</dbReference>
<dbReference type="NCBIfam" id="NF001393">
    <property type="entry name" value="PRK00281.2-4"/>
    <property type="match status" value="1"/>
</dbReference>
<dbReference type="NCBIfam" id="TIGR00753">
    <property type="entry name" value="undec_PP_bacA"/>
    <property type="match status" value="1"/>
</dbReference>
<dbReference type="PANTHER" id="PTHR30622">
    <property type="entry name" value="UNDECAPRENYL-DIPHOSPHATASE"/>
    <property type="match status" value="1"/>
</dbReference>
<dbReference type="PANTHER" id="PTHR30622:SF4">
    <property type="entry name" value="UNDECAPRENYL-DIPHOSPHATASE"/>
    <property type="match status" value="1"/>
</dbReference>
<dbReference type="Pfam" id="PF02673">
    <property type="entry name" value="BacA"/>
    <property type="match status" value="1"/>
</dbReference>
<keyword id="KW-0046">Antibiotic resistance</keyword>
<keyword id="KW-0997">Cell inner membrane</keyword>
<keyword id="KW-1003">Cell membrane</keyword>
<keyword id="KW-0133">Cell shape</keyword>
<keyword id="KW-0961">Cell wall biogenesis/degradation</keyword>
<keyword id="KW-0378">Hydrolase</keyword>
<keyword id="KW-0472">Membrane</keyword>
<keyword id="KW-0573">Peptidoglycan synthesis</keyword>
<keyword id="KW-1185">Reference proteome</keyword>
<keyword id="KW-0812">Transmembrane</keyword>
<keyword id="KW-1133">Transmembrane helix</keyword>
<feature type="chain" id="PRO_0000290763" description="Undecaprenyl-diphosphatase">
    <location>
        <begin position="1"/>
        <end position="266"/>
    </location>
</feature>
<feature type="transmembrane region" description="Helical" evidence="1">
    <location>
        <begin position="1"/>
        <end position="21"/>
    </location>
</feature>
<feature type="transmembrane region" description="Helical" evidence="1">
    <location>
        <begin position="39"/>
        <end position="59"/>
    </location>
</feature>
<feature type="transmembrane region" description="Helical" evidence="1">
    <location>
        <begin position="87"/>
        <end position="107"/>
    </location>
</feature>
<feature type="transmembrane region" description="Helical" evidence="1">
    <location>
        <begin position="114"/>
        <end position="134"/>
    </location>
</feature>
<feature type="transmembrane region" description="Helical" evidence="1">
    <location>
        <begin position="144"/>
        <end position="164"/>
    </location>
</feature>
<feature type="transmembrane region" description="Helical" evidence="1">
    <location>
        <begin position="184"/>
        <end position="204"/>
    </location>
</feature>
<feature type="transmembrane region" description="Helical" evidence="1">
    <location>
        <begin position="218"/>
        <end position="238"/>
    </location>
</feature>
<feature type="transmembrane region" description="Helical" evidence="1">
    <location>
        <begin position="246"/>
        <end position="266"/>
    </location>
</feature>
<gene>
    <name evidence="1" type="primary">uppP</name>
    <name type="ordered locus">Shew_1004</name>
</gene>
<name>UPPP_SHELP</name>
<reference key="1">
    <citation type="submission" date="2007-03" db="EMBL/GenBank/DDBJ databases">
        <title>Complete sequence of Shewanella loihica PV-4.</title>
        <authorList>
            <consortium name="US DOE Joint Genome Institute"/>
            <person name="Copeland A."/>
            <person name="Lucas S."/>
            <person name="Lapidus A."/>
            <person name="Barry K."/>
            <person name="Detter J.C."/>
            <person name="Glavina del Rio T."/>
            <person name="Hammon N."/>
            <person name="Israni S."/>
            <person name="Dalin E."/>
            <person name="Tice H."/>
            <person name="Pitluck S."/>
            <person name="Chain P."/>
            <person name="Malfatti S."/>
            <person name="Shin M."/>
            <person name="Vergez L."/>
            <person name="Schmutz J."/>
            <person name="Larimer F."/>
            <person name="Land M."/>
            <person name="Hauser L."/>
            <person name="Kyrpides N."/>
            <person name="Mikhailova N."/>
            <person name="Romine M.F."/>
            <person name="Serres G."/>
            <person name="Fredrickson J."/>
            <person name="Tiedje J."/>
            <person name="Richardson P."/>
        </authorList>
    </citation>
    <scope>NUCLEOTIDE SEQUENCE [LARGE SCALE GENOMIC DNA]</scope>
    <source>
        <strain>ATCC BAA-1088 / PV-4</strain>
    </source>
</reference>
<protein>
    <recommendedName>
        <fullName evidence="1">Undecaprenyl-diphosphatase</fullName>
        <ecNumber evidence="1">3.6.1.27</ecNumber>
    </recommendedName>
    <alternativeName>
        <fullName evidence="1">Bacitracin resistance protein</fullName>
    </alternativeName>
    <alternativeName>
        <fullName evidence="1">Undecaprenyl pyrophosphate phosphatase</fullName>
    </alternativeName>
</protein>